<gene>
    <name evidence="1" type="primary">thrB</name>
    <name type="ordered locus">Nham_3744</name>
</gene>
<reference key="1">
    <citation type="submission" date="2006-03" db="EMBL/GenBank/DDBJ databases">
        <title>Complete sequence of chromosome of Nitrobacter hamburgensis X14.</title>
        <authorList>
            <consortium name="US DOE Joint Genome Institute"/>
            <person name="Copeland A."/>
            <person name="Lucas S."/>
            <person name="Lapidus A."/>
            <person name="Barry K."/>
            <person name="Detter J.C."/>
            <person name="Glavina del Rio T."/>
            <person name="Hammon N."/>
            <person name="Israni S."/>
            <person name="Dalin E."/>
            <person name="Tice H."/>
            <person name="Pitluck S."/>
            <person name="Chain P."/>
            <person name="Malfatti S."/>
            <person name="Shin M."/>
            <person name="Vergez L."/>
            <person name="Schmutz J."/>
            <person name="Larimer F."/>
            <person name="Land M."/>
            <person name="Hauser L."/>
            <person name="Kyrpides N."/>
            <person name="Ivanova N."/>
            <person name="Ward B."/>
            <person name="Arp D."/>
            <person name="Klotz M."/>
            <person name="Stein L."/>
            <person name="O'Mullan G."/>
            <person name="Starkenburg S."/>
            <person name="Sayavedra L."/>
            <person name="Poret-Peterson A.T."/>
            <person name="Gentry M.E."/>
            <person name="Bruce D."/>
            <person name="Richardson P."/>
        </authorList>
    </citation>
    <scope>NUCLEOTIDE SEQUENCE [LARGE SCALE GENOMIC DNA]</scope>
    <source>
        <strain>DSM 10229 / NCIMB 13809 / X14</strain>
    </source>
</reference>
<keyword id="KW-0028">Amino-acid biosynthesis</keyword>
<keyword id="KW-0067">ATP-binding</keyword>
<keyword id="KW-0418">Kinase</keyword>
<keyword id="KW-0547">Nucleotide-binding</keyword>
<keyword id="KW-1185">Reference proteome</keyword>
<keyword id="KW-0791">Threonine biosynthesis</keyword>
<keyword id="KW-0808">Transferase</keyword>
<accession>Q1QH29</accession>
<organism>
    <name type="scientific">Nitrobacter hamburgensis (strain DSM 10229 / NCIMB 13809 / X14)</name>
    <dbReference type="NCBI Taxonomy" id="323097"/>
    <lineage>
        <taxon>Bacteria</taxon>
        <taxon>Pseudomonadati</taxon>
        <taxon>Pseudomonadota</taxon>
        <taxon>Alphaproteobacteria</taxon>
        <taxon>Hyphomicrobiales</taxon>
        <taxon>Nitrobacteraceae</taxon>
        <taxon>Nitrobacter</taxon>
    </lineage>
</organism>
<protein>
    <recommendedName>
        <fullName evidence="1">Homoserine kinase</fullName>
        <shortName evidence="1">HK</shortName>
        <shortName evidence="1">HSK</shortName>
        <ecNumber evidence="1">2.7.1.39</ecNumber>
    </recommendedName>
</protein>
<dbReference type="EC" id="2.7.1.39" evidence="1"/>
<dbReference type="EMBL" id="CP000319">
    <property type="protein sequence ID" value="ABE64468.1"/>
    <property type="molecule type" value="Genomic_DNA"/>
</dbReference>
<dbReference type="RefSeq" id="WP_011512105.1">
    <property type="nucleotide sequence ID" value="NC_007964.1"/>
</dbReference>
<dbReference type="SMR" id="Q1QH29"/>
<dbReference type="STRING" id="323097.Nham_3744"/>
<dbReference type="KEGG" id="nha:Nham_3744"/>
<dbReference type="eggNOG" id="COG2334">
    <property type="taxonomic scope" value="Bacteria"/>
</dbReference>
<dbReference type="HOGENOM" id="CLU_053300_1_0_5"/>
<dbReference type="OrthoDB" id="9777460at2"/>
<dbReference type="UniPathway" id="UPA00050">
    <property type="reaction ID" value="UER00064"/>
</dbReference>
<dbReference type="Proteomes" id="UP000001953">
    <property type="component" value="Chromosome"/>
</dbReference>
<dbReference type="GO" id="GO:0005524">
    <property type="term" value="F:ATP binding"/>
    <property type="evidence" value="ECO:0007669"/>
    <property type="project" value="UniProtKB-KW"/>
</dbReference>
<dbReference type="GO" id="GO:0004413">
    <property type="term" value="F:homoserine kinase activity"/>
    <property type="evidence" value="ECO:0007669"/>
    <property type="project" value="UniProtKB-UniRule"/>
</dbReference>
<dbReference type="GO" id="GO:0009088">
    <property type="term" value="P:threonine biosynthetic process"/>
    <property type="evidence" value="ECO:0007669"/>
    <property type="project" value="UniProtKB-UniRule"/>
</dbReference>
<dbReference type="CDD" id="cd05153">
    <property type="entry name" value="HomoserineK_II"/>
    <property type="match status" value="1"/>
</dbReference>
<dbReference type="Gene3D" id="3.90.1200.10">
    <property type="match status" value="1"/>
</dbReference>
<dbReference type="Gene3D" id="3.30.200.20">
    <property type="entry name" value="Phosphorylase Kinase, domain 1"/>
    <property type="match status" value="1"/>
</dbReference>
<dbReference type="HAMAP" id="MF_00301">
    <property type="entry name" value="Homoser_kinase_2"/>
    <property type="match status" value="1"/>
</dbReference>
<dbReference type="InterPro" id="IPR002575">
    <property type="entry name" value="Aminoglycoside_PTrfase"/>
</dbReference>
<dbReference type="InterPro" id="IPR005280">
    <property type="entry name" value="Homoserine_kinase_II"/>
</dbReference>
<dbReference type="InterPro" id="IPR011009">
    <property type="entry name" value="Kinase-like_dom_sf"/>
</dbReference>
<dbReference type="InterPro" id="IPR050249">
    <property type="entry name" value="Pseudomonas-type_ThrB"/>
</dbReference>
<dbReference type="NCBIfam" id="NF003558">
    <property type="entry name" value="PRK05231.1"/>
    <property type="match status" value="1"/>
</dbReference>
<dbReference type="NCBIfam" id="TIGR00938">
    <property type="entry name" value="thrB_alt"/>
    <property type="match status" value="1"/>
</dbReference>
<dbReference type="PANTHER" id="PTHR21064:SF6">
    <property type="entry name" value="AMINOGLYCOSIDE PHOSPHOTRANSFERASE DOMAIN-CONTAINING PROTEIN"/>
    <property type="match status" value="1"/>
</dbReference>
<dbReference type="PANTHER" id="PTHR21064">
    <property type="entry name" value="AMINOGLYCOSIDE PHOSPHOTRANSFERASE DOMAIN-CONTAINING PROTEIN-RELATED"/>
    <property type="match status" value="1"/>
</dbReference>
<dbReference type="Pfam" id="PF01636">
    <property type="entry name" value="APH"/>
    <property type="match status" value="1"/>
</dbReference>
<dbReference type="SUPFAM" id="SSF56112">
    <property type="entry name" value="Protein kinase-like (PK-like)"/>
    <property type="match status" value="1"/>
</dbReference>
<proteinExistence type="inferred from homology"/>
<feature type="chain" id="PRO_0000300795" description="Homoserine kinase">
    <location>
        <begin position="1"/>
        <end position="326"/>
    </location>
</feature>
<name>KHSE_NITHX</name>
<comment type="catalytic activity">
    <reaction evidence="1">
        <text>L-homoserine + ATP = O-phospho-L-homoserine + ADP + H(+)</text>
        <dbReference type="Rhea" id="RHEA:13985"/>
        <dbReference type="ChEBI" id="CHEBI:15378"/>
        <dbReference type="ChEBI" id="CHEBI:30616"/>
        <dbReference type="ChEBI" id="CHEBI:57476"/>
        <dbReference type="ChEBI" id="CHEBI:57590"/>
        <dbReference type="ChEBI" id="CHEBI:456216"/>
        <dbReference type="EC" id="2.7.1.39"/>
    </reaction>
</comment>
<comment type="pathway">
    <text evidence="1">Amino-acid biosynthesis; L-threonine biosynthesis; L-threonine from L-aspartate: step 4/5.</text>
</comment>
<comment type="similarity">
    <text evidence="1">Belongs to the pseudomonas-type ThrB family.</text>
</comment>
<sequence>MAVYTDVAADELADFLKAYDIGELLSYKGIAEGVENSNYLLHTTAGSFFLTLYEKRVAVDDLPFFLGLMGHLATHGIVCPQPVKARNGEALGCLAGRPAAIIDFLEGVWPRKPNVTHCAAVGAALAKLHLAGRDFPMRRANALSVSSWRPLFEQATPCIDTVQHGLHDFLKAELDHLERHWPQNLPAGVIHADLFPDNVLFLGDRLSGLIDFYFACNDFFAYDVAICLNAWCFEPDHSFNVTKARALLGAYNRERALSEAEQAALPLLARGAALRFLLTRLVDFLNVPAGALVKPKDPLEYVRKLRFQQSVGNIREYGVAASGLVA</sequence>
<evidence type="ECO:0000255" key="1">
    <source>
        <dbReference type="HAMAP-Rule" id="MF_00301"/>
    </source>
</evidence>